<dbReference type="EC" id="1.2.1.71" evidence="1"/>
<dbReference type="EMBL" id="CP000302">
    <property type="protein sequence ID" value="ABE54344.1"/>
    <property type="molecule type" value="Genomic_DNA"/>
</dbReference>
<dbReference type="RefSeq" id="WP_011495506.1">
    <property type="nucleotide sequence ID" value="NC_007954.1"/>
</dbReference>
<dbReference type="SMR" id="Q12QD2"/>
<dbReference type="STRING" id="318161.Sden_1056"/>
<dbReference type="KEGG" id="sdn:Sden_1056"/>
<dbReference type="eggNOG" id="COG1012">
    <property type="taxonomic scope" value="Bacteria"/>
</dbReference>
<dbReference type="HOGENOM" id="CLU_005391_1_0_6"/>
<dbReference type="OrthoDB" id="9812625at2"/>
<dbReference type="UniPathway" id="UPA00185">
    <property type="reaction ID" value="UER00282"/>
</dbReference>
<dbReference type="Proteomes" id="UP000001982">
    <property type="component" value="Chromosome"/>
</dbReference>
<dbReference type="GO" id="GO:0043824">
    <property type="term" value="F:succinylglutamate-semialdehyde dehydrogenase activity"/>
    <property type="evidence" value="ECO:0007669"/>
    <property type="project" value="UniProtKB-EC"/>
</dbReference>
<dbReference type="GO" id="GO:0019544">
    <property type="term" value="P:arginine catabolic process to glutamate"/>
    <property type="evidence" value="ECO:0007669"/>
    <property type="project" value="UniProtKB-UniRule"/>
</dbReference>
<dbReference type="GO" id="GO:0019545">
    <property type="term" value="P:arginine catabolic process to succinate"/>
    <property type="evidence" value="ECO:0007669"/>
    <property type="project" value="UniProtKB-UniRule"/>
</dbReference>
<dbReference type="CDD" id="cd07095">
    <property type="entry name" value="ALDH_SGSD_AstD"/>
    <property type="match status" value="1"/>
</dbReference>
<dbReference type="FunFam" id="3.40.605.10:FF:000010">
    <property type="entry name" value="N-succinylglutamate 5-semialdehyde dehydrogenase"/>
    <property type="match status" value="1"/>
</dbReference>
<dbReference type="Gene3D" id="3.40.605.10">
    <property type="entry name" value="Aldehyde Dehydrogenase, Chain A, domain 1"/>
    <property type="match status" value="1"/>
</dbReference>
<dbReference type="Gene3D" id="3.40.309.10">
    <property type="entry name" value="Aldehyde Dehydrogenase, Chain A, domain 2"/>
    <property type="match status" value="1"/>
</dbReference>
<dbReference type="HAMAP" id="MF_01174">
    <property type="entry name" value="Aldedh_AstD"/>
    <property type="match status" value="1"/>
</dbReference>
<dbReference type="InterPro" id="IPR016161">
    <property type="entry name" value="Ald_DH/histidinol_DH"/>
</dbReference>
<dbReference type="InterPro" id="IPR016163">
    <property type="entry name" value="Ald_DH_C"/>
</dbReference>
<dbReference type="InterPro" id="IPR016160">
    <property type="entry name" value="Ald_DH_CS_CYS"/>
</dbReference>
<dbReference type="InterPro" id="IPR029510">
    <property type="entry name" value="Ald_DH_CS_GLU"/>
</dbReference>
<dbReference type="InterPro" id="IPR016162">
    <property type="entry name" value="Ald_DH_N"/>
</dbReference>
<dbReference type="InterPro" id="IPR015590">
    <property type="entry name" value="Aldehyde_DH_dom"/>
</dbReference>
<dbReference type="InterPro" id="IPR017649">
    <property type="entry name" value="SuccinylGlu_semiald_DH_AstD"/>
</dbReference>
<dbReference type="NCBIfam" id="TIGR03240">
    <property type="entry name" value="arg_catab_astD"/>
    <property type="match status" value="1"/>
</dbReference>
<dbReference type="NCBIfam" id="NF006992">
    <property type="entry name" value="PRK09457.1"/>
    <property type="match status" value="1"/>
</dbReference>
<dbReference type="PANTHER" id="PTHR11699">
    <property type="entry name" value="ALDEHYDE DEHYDROGENASE-RELATED"/>
    <property type="match status" value="1"/>
</dbReference>
<dbReference type="Pfam" id="PF00171">
    <property type="entry name" value="Aldedh"/>
    <property type="match status" value="1"/>
</dbReference>
<dbReference type="SUPFAM" id="SSF53720">
    <property type="entry name" value="ALDH-like"/>
    <property type="match status" value="1"/>
</dbReference>
<dbReference type="PROSITE" id="PS00070">
    <property type="entry name" value="ALDEHYDE_DEHYDR_CYS"/>
    <property type="match status" value="1"/>
</dbReference>
<dbReference type="PROSITE" id="PS00687">
    <property type="entry name" value="ALDEHYDE_DEHYDR_GLU"/>
    <property type="match status" value="1"/>
</dbReference>
<organism>
    <name type="scientific">Shewanella denitrificans (strain OS217 / ATCC BAA-1090 / DSM 15013)</name>
    <dbReference type="NCBI Taxonomy" id="318161"/>
    <lineage>
        <taxon>Bacteria</taxon>
        <taxon>Pseudomonadati</taxon>
        <taxon>Pseudomonadota</taxon>
        <taxon>Gammaproteobacteria</taxon>
        <taxon>Alteromonadales</taxon>
        <taxon>Shewanellaceae</taxon>
        <taxon>Shewanella</taxon>
    </lineage>
</organism>
<accession>Q12QD2</accession>
<keyword id="KW-0056">Arginine metabolism</keyword>
<keyword id="KW-0520">NAD</keyword>
<keyword id="KW-0560">Oxidoreductase</keyword>
<keyword id="KW-1185">Reference proteome</keyword>
<evidence type="ECO:0000255" key="1">
    <source>
        <dbReference type="HAMAP-Rule" id="MF_01174"/>
    </source>
</evidence>
<gene>
    <name evidence="1" type="primary">astD1</name>
    <name type="ordered locus">Sden_1056</name>
</gene>
<name>ASTD1_SHEDO</name>
<feature type="chain" id="PRO_0000262423" description="N-succinylglutamate 5-semialdehyde dehydrogenase 1">
    <location>
        <begin position="1"/>
        <end position="498"/>
    </location>
</feature>
<feature type="active site" evidence="1">
    <location>
        <position position="254"/>
    </location>
</feature>
<feature type="active site" evidence="1">
    <location>
        <position position="288"/>
    </location>
</feature>
<feature type="binding site" evidence="1">
    <location>
        <begin position="231"/>
        <end position="236"/>
    </location>
    <ligand>
        <name>NAD(+)</name>
        <dbReference type="ChEBI" id="CHEBI:57540"/>
    </ligand>
</feature>
<comment type="function">
    <text evidence="1">Catalyzes the NAD-dependent reduction of succinylglutamate semialdehyde into succinylglutamate.</text>
</comment>
<comment type="catalytic activity">
    <reaction evidence="1">
        <text>N-succinyl-L-glutamate 5-semialdehyde + NAD(+) + H2O = N-succinyl-L-glutamate + NADH + 2 H(+)</text>
        <dbReference type="Rhea" id="RHEA:10812"/>
        <dbReference type="ChEBI" id="CHEBI:15377"/>
        <dbReference type="ChEBI" id="CHEBI:15378"/>
        <dbReference type="ChEBI" id="CHEBI:57540"/>
        <dbReference type="ChEBI" id="CHEBI:57945"/>
        <dbReference type="ChEBI" id="CHEBI:58520"/>
        <dbReference type="ChEBI" id="CHEBI:58763"/>
        <dbReference type="EC" id="1.2.1.71"/>
    </reaction>
</comment>
<comment type="pathway">
    <text evidence="1">Amino-acid degradation; L-arginine degradation via AST pathway; L-glutamate and succinate from L-arginine: step 4/5.</text>
</comment>
<comment type="similarity">
    <text evidence="1">Belongs to the aldehyde dehydrogenase family. AstD subfamily.</text>
</comment>
<protein>
    <recommendedName>
        <fullName evidence="1">N-succinylglutamate 5-semialdehyde dehydrogenase 1</fullName>
        <ecNumber evidence="1">1.2.1.71</ecNumber>
    </recommendedName>
    <alternativeName>
        <fullName evidence="1">Succinylglutamic semialdehyde dehydrogenase 1</fullName>
        <shortName evidence="1">SGSD 1</shortName>
    </alternativeName>
</protein>
<reference key="1">
    <citation type="submission" date="2006-03" db="EMBL/GenBank/DDBJ databases">
        <title>Complete sequence of Shewanella denitrificans OS217.</title>
        <authorList>
            <consortium name="US DOE Joint Genome Institute"/>
            <person name="Copeland A."/>
            <person name="Lucas S."/>
            <person name="Lapidus A."/>
            <person name="Barry K."/>
            <person name="Detter J.C."/>
            <person name="Glavina del Rio T."/>
            <person name="Hammon N."/>
            <person name="Israni S."/>
            <person name="Dalin E."/>
            <person name="Tice H."/>
            <person name="Pitluck S."/>
            <person name="Brettin T."/>
            <person name="Bruce D."/>
            <person name="Han C."/>
            <person name="Tapia R."/>
            <person name="Gilna P."/>
            <person name="Kiss H."/>
            <person name="Schmutz J."/>
            <person name="Larimer F."/>
            <person name="Land M."/>
            <person name="Hauser L."/>
            <person name="Kyrpides N."/>
            <person name="Lykidis A."/>
            <person name="Richardson P."/>
        </authorList>
    </citation>
    <scope>NUCLEOTIDE SEQUENCE [LARGE SCALE GENOMIC DNA]</scope>
    <source>
        <strain>OS217 / ATCC BAA-1090 / DSM 15013</strain>
    </source>
</reference>
<sequence length="498" mass="52396">MNQLEQLTPLTQTQFIAGQWLAGKGPSFSSVNPANGEVIWQGLGADAGQVDAAITSARAAFYTWSAMSLTERLVIVEAFAEQLKEHAELFARTIALETGKALWESRTEVGAMTGKIAISIKANAERTGTVENPMPGAKAFIRHKPHGVVAVFGPYNFPGHLPNGHIVPALIAGNTVLFKPSELTPKVAELTMQLWQQAGLPNGVLNLLQGEIATGKALASHKGIDGLFFTGSSNTGHLLHQQYAGQPGKILALEMGGNNPLIITEVANVDAAVHDIIQSAFISSGQRCTCARRLFIPKTANGDAILAKLLTSTAKIALGDPFAETQPFFGAMISDKAAAGMVKAQADIQAAGGVSLIELTQVTPGLGFVTPGIIDVTDASPLADEEHFGPLLKVYRYTDFDAAIDEANNTSFGLSAGLLADSETDYQHFYRRIRAGIVNWNKPITGASSAAPFGGIGASGNHRASAYYAADYCAYPVSSVEAQAVSLPASLSPGLVIE</sequence>
<proteinExistence type="inferred from homology"/>